<protein>
    <recommendedName>
        <fullName evidence="1">FMN-dependent NADH:quinone oxidoreductase</fullName>
        <ecNumber evidence="1">1.6.5.-</ecNumber>
    </recommendedName>
    <alternativeName>
        <fullName evidence="1">Azo-dye reductase</fullName>
    </alternativeName>
    <alternativeName>
        <fullName evidence="1">FMN-dependent NADH-azo compound oxidoreductase</fullName>
    </alternativeName>
    <alternativeName>
        <fullName evidence="1">FMN-dependent NADH-azoreductase</fullName>
        <ecNumber evidence="1">1.7.1.17</ecNumber>
    </alternativeName>
</protein>
<keyword id="KW-0285">Flavoprotein</keyword>
<keyword id="KW-0288">FMN</keyword>
<keyword id="KW-0520">NAD</keyword>
<keyword id="KW-0560">Oxidoreductase</keyword>
<sequence>MTKLLYITAHPLDELGSNSMAAGKTFVDSYKENHPSDEVKHIDLFNEDIPMIDKDVLTGWGKLRNGDELTSEEQQKVNRLSEILDEFLEADKYVFVSPMWNLSFPPVLKAYIDAISIAGKTFKYTAEGPQGLLTDKKVLHIQSRGGYYTEGPAAEVESGDRYLRNIMTFLGVPSYETIIIEGHNAEPEKTEEIKAASIAEAKELAKTF</sequence>
<proteinExistence type="inferred from homology"/>
<evidence type="ECO:0000255" key="1">
    <source>
        <dbReference type="HAMAP-Rule" id="MF_01216"/>
    </source>
</evidence>
<organism>
    <name type="scientific">Staphylococcus haemolyticus (strain JCSC1435)</name>
    <dbReference type="NCBI Taxonomy" id="279808"/>
    <lineage>
        <taxon>Bacteria</taxon>
        <taxon>Bacillati</taxon>
        <taxon>Bacillota</taxon>
        <taxon>Bacilli</taxon>
        <taxon>Bacillales</taxon>
        <taxon>Staphylococcaceae</taxon>
        <taxon>Staphylococcus</taxon>
    </lineage>
</organism>
<comment type="function">
    <text evidence="1">Quinone reductase that provides resistance to thiol-specific stress caused by electrophilic quinones.</text>
</comment>
<comment type="function">
    <text evidence="1">Also exhibits azoreductase activity. Catalyzes the reductive cleavage of the azo bond in aromatic azo compounds to the corresponding amines.</text>
</comment>
<comment type="catalytic activity">
    <reaction evidence="1">
        <text>2 a quinone + NADH + H(+) = 2 a 1,4-benzosemiquinone + NAD(+)</text>
        <dbReference type="Rhea" id="RHEA:65952"/>
        <dbReference type="ChEBI" id="CHEBI:15378"/>
        <dbReference type="ChEBI" id="CHEBI:57540"/>
        <dbReference type="ChEBI" id="CHEBI:57945"/>
        <dbReference type="ChEBI" id="CHEBI:132124"/>
        <dbReference type="ChEBI" id="CHEBI:134225"/>
    </reaction>
</comment>
<comment type="catalytic activity">
    <reaction evidence="1">
        <text>N,N-dimethyl-1,4-phenylenediamine + anthranilate + 2 NAD(+) = 2-(4-dimethylaminophenyl)diazenylbenzoate + 2 NADH + 2 H(+)</text>
        <dbReference type="Rhea" id="RHEA:55872"/>
        <dbReference type="ChEBI" id="CHEBI:15378"/>
        <dbReference type="ChEBI" id="CHEBI:15783"/>
        <dbReference type="ChEBI" id="CHEBI:16567"/>
        <dbReference type="ChEBI" id="CHEBI:57540"/>
        <dbReference type="ChEBI" id="CHEBI:57945"/>
        <dbReference type="ChEBI" id="CHEBI:71579"/>
        <dbReference type="EC" id="1.7.1.17"/>
    </reaction>
</comment>
<comment type="cofactor">
    <cofactor evidence="1">
        <name>FMN</name>
        <dbReference type="ChEBI" id="CHEBI:58210"/>
    </cofactor>
    <text evidence="1">Binds 1 FMN per subunit.</text>
</comment>
<comment type="subunit">
    <text evidence="1">Homodimer.</text>
</comment>
<comment type="similarity">
    <text evidence="1">Belongs to the azoreductase type 1 family.</text>
</comment>
<feature type="chain" id="PRO_0000166359" description="FMN-dependent NADH:quinone oxidoreductase">
    <location>
        <begin position="1"/>
        <end position="208"/>
    </location>
</feature>
<feature type="binding site" evidence="1">
    <location>
        <begin position="17"/>
        <end position="19"/>
    </location>
    <ligand>
        <name>FMN</name>
        <dbReference type="ChEBI" id="CHEBI:58210"/>
    </ligand>
</feature>
<feature type="binding site" evidence="1">
    <location>
        <begin position="99"/>
        <end position="102"/>
    </location>
    <ligand>
        <name>FMN</name>
        <dbReference type="ChEBI" id="CHEBI:58210"/>
    </ligand>
</feature>
<feature type="binding site" evidence="1">
    <location>
        <begin position="143"/>
        <end position="146"/>
    </location>
    <ligand>
        <name>FMN</name>
        <dbReference type="ChEBI" id="CHEBI:58210"/>
    </ligand>
</feature>
<dbReference type="EC" id="1.6.5.-" evidence="1"/>
<dbReference type="EC" id="1.7.1.17" evidence="1"/>
<dbReference type="EMBL" id="AP006716">
    <property type="protein sequence ID" value="BAE03695.1"/>
    <property type="molecule type" value="Genomic_DNA"/>
</dbReference>
<dbReference type="RefSeq" id="WP_011274712.1">
    <property type="nucleotide sequence ID" value="NC_007168.1"/>
</dbReference>
<dbReference type="SMR" id="Q4L9I0"/>
<dbReference type="KEGG" id="sha:SH0386"/>
<dbReference type="eggNOG" id="COG1182">
    <property type="taxonomic scope" value="Bacteria"/>
</dbReference>
<dbReference type="HOGENOM" id="CLU_088964_3_1_9"/>
<dbReference type="OrthoDB" id="9805013at2"/>
<dbReference type="Proteomes" id="UP000000543">
    <property type="component" value="Chromosome"/>
</dbReference>
<dbReference type="GO" id="GO:0009055">
    <property type="term" value="F:electron transfer activity"/>
    <property type="evidence" value="ECO:0007669"/>
    <property type="project" value="UniProtKB-UniRule"/>
</dbReference>
<dbReference type="GO" id="GO:0010181">
    <property type="term" value="F:FMN binding"/>
    <property type="evidence" value="ECO:0007669"/>
    <property type="project" value="UniProtKB-UniRule"/>
</dbReference>
<dbReference type="GO" id="GO:0016652">
    <property type="term" value="F:oxidoreductase activity, acting on NAD(P)H as acceptor"/>
    <property type="evidence" value="ECO:0007669"/>
    <property type="project" value="UniProtKB-UniRule"/>
</dbReference>
<dbReference type="GO" id="GO:0016655">
    <property type="term" value="F:oxidoreductase activity, acting on NAD(P)H, quinone or similar compound as acceptor"/>
    <property type="evidence" value="ECO:0007669"/>
    <property type="project" value="InterPro"/>
</dbReference>
<dbReference type="Gene3D" id="3.40.50.360">
    <property type="match status" value="1"/>
</dbReference>
<dbReference type="HAMAP" id="MF_01216">
    <property type="entry name" value="Azoreductase_type1"/>
    <property type="match status" value="1"/>
</dbReference>
<dbReference type="InterPro" id="IPR003680">
    <property type="entry name" value="Flavodoxin_fold"/>
</dbReference>
<dbReference type="InterPro" id="IPR029039">
    <property type="entry name" value="Flavoprotein-like_sf"/>
</dbReference>
<dbReference type="InterPro" id="IPR050104">
    <property type="entry name" value="FMN-dep_NADH:Q_OxRdtase_AzoR1"/>
</dbReference>
<dbReference type="InterPro" id="IPR023048">
    <property type="entry name" value="NADH:quinone_OxRdtase_FMN_depd"/>
</dbReference>
<dbReference type="NCBIfam" id="NF010075">
    <property type="entry name" value="PRK13556.1"/>
    <property type="match status" value="1"/>
</dbReference>
<dbReference type="PANTHER" id="PTHR43741">
    <property type="entry name" value="FMN-DEPENDENT NADH-AZOREDUCTASE 1"/>
    <property type="match status" value="1"/>
</dbReference>
<dbReference type="PANTHER" id="PTHR43741:SF7">
    <property type="entry name" value="FMN-DEPENDENT NADH:QUINONE OXIDOREDUCTASE"/>
    <property type="match status" value="1"/>
</dbReference>
<dbReference type="Pfam" id="PF02525">
    <property type="entry name" value="Flavodoxin_2"/>
    <property type="match status" value="1"/>
</dbReference>
<dbReference type="SUPFAM" id="SSF52218">
    <property type="entry name" value="Flavoproteins"/>
    <property type="match status" value="1"/>
</dbReference>
<name>AZOR_STAHJ</name>
<reference key="1">
    <citation type="journal article" date="2005" name="J. Bacteriol.">
        <title>Whole-genome sequencing of Staphylococcus haemolyticus uncovers the extreme plasticity of its genome and the evolution of human-colonizing staphylococcal species.</title>
        <authorList>
            <person name="Takeuchi F."/>
            <person name="Watanabe S."/>
            <person name="Baba T."/>
            <person name="Yuzawa H."/>
            <person name="Ito T."/>
            <person name="Morimoto Y."/>
            <person name="Kuroda M."/>
            <person name="Cui L."/>
            <person name="Takahashi M."/>
            <person name="Ankai A."/>
            <person name="Baba S."/>
            <person name="Fukui S."/>
            <person name="Lee J.C."/>
            <person name="Hiramatsu K."/>
        </authorList>
    </citation>
    <scope>NUCLEOTIDE SEQUENCE [LARGE SCALE GENOMIC DNA]</scope>
    <source>
        <strain>JCSC1435</strain>
    </source>
</reference>
<gene>
    <name evidence="1" type="primary">azoR</name>
    <name type="ordered locus">SH0386</name>
</gene>
<accession>Q4L9I0</accession>